<dbReference type="EMBL" id="CP001091">
    <property type="protein sequence ID" value="ACE61714.1"/>
    <property type="molecule type" value="Genomic_DNA"/>
</dbReference>
<dbReference type="RefSeq" id="WP_005597777.1">
    <property type="nucleotide sequence ID" value="NC_010939.1"/>
</dbReference>
<dbReference type="SMR" id="B3H1N7"/>
<dbReference type="GeneID" id="67368470"/>
<dbReference type="KEGG" id="apa:APP7_1062"/>
<dbReference type="HOGENOM" id="CLU_148518_0_0_6"/>
<dbReference type="Proteomes" id="UP000001226">
    <property type="component" value="Chromosome"/>
</dbReference>
<dbReference type="GO" id="GO:0022627">
    <property type="term" value="C:cytosolic small ribosomal subunit"/>
    <property type="evidence" value="ECO:0007669"/>
    <property type="project" value="TreeGrafter"/>
</dbReference>
<dbReference type="GO" id="GO:0019843">
    <property type="term" value="F:rRNA binding"/>
    <property type="evidence" value="ECO:0007669"/>
    <property type="project" value="UniProtKB-UniRule"/>
</dbReference>
<dbReference type="GO" id="GO:0003735">
    <property type="term" value="F:structural constituent of ribosome"/>
    <property type="evidence" value="ECO:0007669"/>
    <property type="project" value="InterPro"/>
</dbReference>
<dbReference type="GO" id="GO:0006412">
    <property type="term" value="P:translation"/>
    <property type="evidence" value="ECO:0007669"/>
    <property type="project" value="UniProtKB-UniRule"/>
</dbReference>
<dbReference type="CDD" id="cd00353">
    <property type="entry name" value="Ribosomal_S15p_S13e"/>
    <property type="match status" value="1"/>
</dbReference>
<dbReference type="FunFam" id="1.10.287.10:FF:000002">
    <property type="entry name" value="30S ribosomal protein S15"/>
    <property type="match status" value="1"/>
</dbReference>
<dbReference type="Gene3D" id="6.10.250.3130">
    <property type="match status" value="1"/>
</dbReference>
<dbReference type="Gene3D" id="1.10.287.10">
    <property type="entry name" value="S15/NS1, RNA-binding"/>
    <property type="match status" value="1"/>
</dbReference>
<dbReference type="HAMAP" id="MF_01343_B">
    <property type="entry name" value="Ribosomal_uS15_B"/>
    <property type="match status" value="1"/>
</dbReference>
<dbReference type="InterPro" id="IPR000589">
    <property type="entry name" value="Ribosomal_uS15"/>
</dbReference>
<dbReference type="InterPro" id="IPR005290">
    <property type="entry name" value="Ribosomal_uS15_bac-type"/>
</dbReference>
<dbReference type="InterPro" id="IPR009068">
    <property type="entry name" value="uS15_NS1_RNA-bd_sf"/>
</dbReference>
<dbReference type="NCBIfam" id="TIGR00952">
    <property type="entry name" value="S15_bact"/>
    <property type="match status" value="1"/>
</dbReference>
<dbReference type="PANTHER" id="PTHR23321">
    <property type="entry name" value="RIBOSOMAL PROTEIN S15, BACTERIAL AND ORGANELLAR"/>
    <property type="match status" value="1"/>
</dbReference>
<dbReference type="PANTHER" id="PTHR23321:SF26">
    <property type="entry name" value="SMALL RIBOSOMAL SUBUNIT PROTEIN US15M"/>
    <property type="match status" value="1"/>
</dbReference>
<dbReference type="Pfam" id="PF00312">
    <property type="entry name" value="Ribosomal_S15"/>
    <property type="match status" value="1"/>
</dbReference>
<dbReference type="SMART" id="SM01387">
    <property type="entry name" value="Ribosomal_S15"/>
    <property type="match status" value="1"/>
</dbReference>
<dbReference type="SUPFAM" id="SSF47060">
    <property type="entry name" value="S15/NS1 RNA-binding domain"/>
    <property type="match status" value="1"/>
</dbReference>
<dbReference type="PROSITE" id="PS00362">
    <property type="entry name" value="RIBOSOMAL_S15"/>
    <property type="match status" value="1"/>
</dbReference>
<name>RS15_ACTP7</name>
<gene>
    <name evidence="1" type="primary">rpsO</name>
    <name type="ordered locus">APP7_1062</name>
</gene>
<organism>
    <name type="scientific">Actinobacillus pleuropneumoniae serotype 7 (strain AP76)</name>
    <dbReference type="NCBI Taxonomy" id="537457"/>
    <lineage>
        <taxon>Bacteria</taxon>
        <taxon>Pseudomonadati</taxon>
        <taxon>Pseudomonadota</taxon>
        <taxon>Gammaproteobacteria</taxon>
        <taxon>Pasteurellales</taxon>
        <taxon>Pasteurellaceae</taxon>
        <taxon>Actinobacillus</taxon>
    </lineage>
</organism>
<comment type="function">
    <text evidence="1">One of the primary rRNA binding proteins, it binds directly to 16S rRNA where it helps nucleate assembly of the platform of the 30S subunit by binding and bridging several RNA helices of the 16S rRNA.</text>
</comment>
<comment type="function">
    <text evidence="1">Forms an intersubunit bridge (bridge B4) with the 23S rRNA of the 50S subunit in the ribosome.</text>
</comment>
<comment type="subunit">
    <text evidence="1">Part of the 30S ribosomal subunit. Forms a bridge to the 50S subunit in the 70S ribosome, contacting the 23S rRNA.</text>
</comment>
<comment type="similarity">
    <text evidence="1">Belongs to the universal ribosomal protein uS15 family.</text>
</comment>
<proteinExistence type="inferred from homology"/>
<feature type="chain" id="PRO_1000143065" description="Small ribosomal subunit protein uS15">
    <location>
        <begin position="1"/>
        <end position="89"/>
    </location>
</feature>
<sequence>MSLSVEAKAKIVAEFGRDAKDTGSSEVQIALLTAQINHLQAHFAEHKKDHHGRRGLLRMVSRRRKLLDYLKRTDLAKYSETIARLGLRR</sequence>
<keyword id="KW-0687">Ribonucleoprotein</keyword>
<keyword id="KW-0689">Ribosomal protein</keyword>
<keyword id="KW-0694">RNA-binding</keyword>
<keyword id="KW-0699">rRNA-binding</keyword>
<reference key="1">
    <citation type="submission" date="2008-06" db="EMBL/GenBank/DDBJ databases">
        <title>Genome and proteome analysis of A. pleuropneumoniae serotype 7.</title>
        <authorList>
            <person name="Linke B."/>
            <person name="Buettner F."/>
            <person name="Martinez-Arias R."/>
            <person name="Goesmann A."/>
            <person name="Baltes N."/>
            <person name="Tegetmeyer H."/>
            <person name="Singh M."/>
            <person name="Gerlach G.F."/>
        </authorList>
    </citation>
    <scope>NUCLEOTIDE SEQUENCE [LARGE SCALE GENOMIC DNA]</scope>
    <source>
        <strain>AP76</strain>
    </source>
</reference>
<accession>B3H1N7</accession>
<protein>
    <recommendedName>
        <fullName evidence="1">Small ribosomal subunit protein uS15</fullName>
    </recommendedName>
    <alternativeName>
        <fullName evidence="2">30S ribosomal protein S15</fullName>
    </alternativeName>
</protein>
<evidence type="ECO:0000255" key="1">
    <source>
        <dbReference type="HAMAP-Rule" id="MF_01343"/>
    </source>
</evidence>
<evidence type="ECO:0000305" key="2"/>